<accession>B1XA74</accession>
<gene>
    <name evidence="1" type="primary">fadR</name>
    <name type="ordered locus">ECDH10B_1240</name>
</gene>
<organism>
    <name type="scientific">Escherichia coli (strain K12 / DH10B)</name>
    <dbReference type="NCBI Taxonomy" id="316385"/>
    <lineage>
        <taxon>Bacteria</taxon>
        <taxon>Pseudomonadati</taxon>
        <taxon>Pseudomonadota</taxon>
        <taxon>Gammaproteobacteria</taxon>
        <taxon>Enterobacterales</taxon>
        <taxon>Enterobacteriaceae</taxon>
        <taxon>Escherichia</taxon>
    </lineage>
</organism>
<proteinExistence type="inferred from homology"/>
<reference key="1">
    <citation type="journal article" date="2008" name="J. Bacteriol.">
        <title>The complete genome sequence of Escherichia coli DH10B: insights into the biology of a laboratory workhorse.</title>
        <authorList>
            <person name="Durfee T."/>
            <person name="Nelson R."/>
            <person name="Baldwin S."/>
            <person name="Plunkett G. III"/>
            <person name="Burland V."/>
            <person name="Mau B."/>
            <person name="Petrosino J.F."/>
            <person name="Qin X."/>
            <person name="Muzny D.M."/>
            <person name="Ayele M."/>
            <person name="Gibbs R.A."/>
            <person name="Csorgo B."/>
            <person name="Posfai G."/>
            <person name="Weinstock G.M."/>
            <person name="Blattner F.R."/>
        </authorList>
    </citation>
    <scope>NUCLEOTIDE SEQUENCE [LARGE SCALE GENOMIC DNA]</scope>
    <source>
        <strain>K12 / DH10B</strain>
    </source>
</reference>
<dbReference type="EMBL" id="CP000948">
    <property type="protein sequence ID" value="ACB02357.1"/>
    <property type="molecule type" value="Genomic_DNA"/>
</dbReference>
<dbReference type="RefSeq" id="WP_000234823.1">
    <property type="nucleotide sequence ID" value="NC_010473.1"/>
</dbReference>
<dbReference type="SMR" id="B1XA74"/>
<dbReference type="GeneID" id="93776245"/>
<dbReference type="KEGG" id="ecd:ECDH10B_1240"/>
<dbReference type="HOGENOM" id="CLU_017584_9_4_6"/>
<dbReference type="GO" id="GO:0005737">
    <property type="term" value="C:cytoplasm"/>
    <property type="evidence" value="ECO:0007669"/>
    <property type="project" value="UniProtKB-SubCell"/>
</dbReference>
<dbReference type="GO" id="GO:0003677">
    <property type="term" value="F:DNA binding"/>
    <property type="evidence" value="ECO:0007669"/>
    <property type="project" value="UniProtKB-KW"/>
</dbReference>
<dbReference type="GO" id="GO:0003700">
    <property type="term" value="F:DNA-binding transcription factor activity"/>
    <property type="evidence" value="ECO:0007669"/>
    <property type="project" value="UniProtKB-UniRule"/>
</dbReference>
<dbReference type="GO" id="GO:0000062">
    <property type="term" value="F:fatty-acyl-CoA binding"/>
    <property type="evidence" value="ECO:0007669"/>
    <property type="project" value="InterPro"/>
</dbReference>
<dbReference type="GO" id="GO:0006631">
    <property type="term" value="P:fatty acid metabolic process"/>
    <property type="evidence" value="ECO:0007669"/>
    <property type="project" value="UniProtKB-KW"/>
</dbReference>
<dbReference type="GO" id="GO:0019217">
    <property type="term" value="P:regulation of fatty acid metabolic process"/>
    <property type="evidence" value="ECO:0007669"/>
    <property type="project" value="UniProtKB-UniRule"/>
</dbReference>
<dbReference type="CDD" id="cd07377">
    <property type="entry name" value="WHTH_GntR"/>
    <property type="match status" value="1"/>
</dbReference>
<dbReference type="FunFam" id="1.10.10.10:FF:000036">
    <property type="entry name" value="Fatty acid metabolism regulator protein"/>
    <property type="match status" value="1"/>
</dbReference>
<dbReference type="FunFam" id="1.20.120.530:FF:000003">
    <property type="entry name" value="Fatty acid metabolism regulator protein"/>
    <property type="match status" value="1"/>
</dbReference>
<dbReference type="Gene3D" id="1.20.120.530">
    <property type="entry name" value="GntR ligand-binding domain-like"/>
    <property type="match status" value="1"/>
</dbReference>
<dbReference type="Gene3D" id="1.10.10.10">
    <property type="entry name" value="Winged helix-like DNA-binding domain superfamily/Winged helix DNA-binding domain"/>
    <property type="match status" value="1"/>
</dbReference>
<dbReference type="HAMAP" id="MF_00696">
    <property type="entry name" value="HTH_FadR"/>
    <property type="match status" value="1"/>
</dbReference>
<dbReference type="InterPro" id="IPR014178">
    <property type="entry name" value="FA-response_TF_FadR"/>
</dbReference>
<dbReference type="InterPro" id="IPR028374">
    <property type="entry name" value="FadR_C"/>
</dbReference>
<dbReference type="InterPro" id="IPR008920">
    <property type="entry name" value="TF_FadR/GntR_C"/>
</dbReference>
<dbReference type="InterPro" id="IPR000524">
    <property type="entry name" value="Tscrpt_reg_HTH_GntR"/>
</dbReference>
<dbReference type="InterPro" id="IPR036388">
    <property type="entry name" value="WH-like_DNA-bd_sf"/>
</dbReference>
<dbReference type="InterPro" id="IPR036390">
    <property type="entry name" value="WH_DNA-bd_sf"/>
</dbReference>
<dbReference type="NCBIfam" id="TIGR02812">
    <property type="entry name" value="fadR_gamma"/>
    <property type="match status" value="1"/>
</dbReference>
<dbReference type="NCBIfam" id="NF003444">
    <property type="entry name" value="PRK04984.1"/>
    <property type="match status" value="1"/>
</dbReference>
<dbReference type="PANTHER" id="PTHR43537:SF52">
    <property type="entry name" value="FATTY ACID METABOLISM REGULATOR PROTEIN"/>
    <property type="match status" value="1"/>
</dbReference>
<dbReference type="PANTHER" id="PTHR43537">
    <property type="entry name" value="TRANSCRIPTIONAL REGULATOR, GNTR FAMILY"/>
    <property type="match status" value="1"/>
</dbReference>
<dbReference type="Pfam" id="PF07840">
    <property type="entry name" value="FadR_C"/>
    <property type="match status" value="1"/>
</dbReference>
<dbReference type="Pfam" id="PF00392">
    <property type="entry name" value="GntR"/>
    <property type="match status" value="1"/>
</dbReference>
<dbReference type="PRINTS" id="PR00035">
    <property type="entry name" value="HTHGNTR"/>
</dbReference>
<dbReference type="SMART" id="SM00345">
    <property type="entry name" value="HTH_GNTR"/>
    <property type="match status" value="1"/>
</dbReference>
<dbReference type="SUPFAM" id="SSF48008">
    <property type="entry name" value="GntR ligand-binding domain-like"/>
    <property type="match status" value="1"/>
</dbReference>
<dbReference type="SUPFAM" id="SSF46785">
    <property type="entry name" value="Winged helix' DNA-binding domain"/>
    <property type="match status" value="1"/>
</dbReference>
<dbReference type="PROSITE" id="PS50949">
    <property type="entry name" value="HTH_GNTR"/>
    <property type="match status" value="1"/>
</dbReference>
<evidence type="ECO:0000255" key="1">
    <source>
        <dbReference type="HAMAP-Rule" id="MF_00696"/>
    </source>
</evidence>
<protein>
    <recommendedName>
        <fullName evidence="1">Fatty acid metabolism regulator protein</fullName>
    </recommendedName>
</protein>
<keyword id="KW-0010">Activator</keyword>
<keyword id="KW-0963">Cytoplasm</keyword>
<keyword id="KW-0238">DNA-binding</keyword>
<keyword id="KW-0276">Fatty acid metabolism</keyword>
<keyword id="KW-0443">Lipid metabolism</keyword>
<keyword id="KW-0678">Repressor</keyword>
<keyword id="KW-0804">Transcription</keyword>
<keyword id="KW-0805">Transcription regulation</keyword>
<feature type="chain" id="PRO_1000132316" description="Fatty acid metabolism regulator protein">
    <location>
        <begin position="1"/>
        <end position="239"/>
    </location>
</feature>
<feature type="domain" description="HTH gntR-type" evidence="1">
    <location>
        <begin position="6"/>
        <end position="74"/>
    </location>
</feature>
<feature type="DNA-binding region" description="H-T-H motif" evidence="1">
    <location>
        <begin position="34"/>
        <end position="53"/>
    </location>
</feature>
<sequence length="239" mass="26969">MVIKAQSPAGFAEEYIIESIWNNRFPPGTILPAERELSELIGVTRTTLREVLQRLARDGWLTIQHGKPTKVNNFWETSGLNILETLARLDHESVPQLIDNLLSVRTNISTIFIRTAFRQHPDKAQEVLATANEVADHADAFAELDYNIFRGLAFASGNPIYGLILNGMKGLYTRIGRHYFANPEARSLALGFYHKLSALCSEGAHDQVYETVRRYGHESGEIWHRMQKNLPGDLAIQGR</sequence>
<name>FADR_ECODH</name>
<comment type="function">
    <text evidence="1">Multifunctional regulator of fatty acid metabolism.</text>
</comment>
<comment type="subunit">
    <text evidence="1">Homodimer.</text>
</comment>
<comment type="subcellular location">
    <subcellularLocation>
        <location evidence="1">Cytoplasm</location>
    </subcellularLocation>
</comment>